<gene>
    <name evidence="2" type="primary">rpsQ</name>
    <name type="ordered locus">STY4367</name>
    <name type="ordered locus">t4074</name>
</gene>
<feature type="initiator methionine" description="Removed" evidence="1">
    <location>
        <position position="1"/>
    </location>
</feature>
<feature type="chain" id="PRO_0000128474" description="Small ribosomal subunit protein uS17">
    <location>
        <begin position="2"/>
        <end position="84"/>
    </location>
</feature>
<accession>P66452</accession>
<accession>Q8XEL0</accession>
<dbReference type="EMBL" id="AL513382">
    <property type="protein sequence ID" value="CAD08182.1"/>
    <property type="molecule type" value="Genomic_DNA"/>
</dbReference>
<dbReference type="EMBL" id="AE014613">
    <property type="protein sequence ID" value="AAO71541.1"/>
    <property type="molecule type" value="Genomic_DNA"/>
</dbReference>
<dbReference type="RefSeq" id="NP_458469.1">
    <property type="nucleotide sequence ID" value="NC_003198.1"/>
</dbReference>
<dbReference type="RefSeq" id="WP_000130101.1">
    <property type="nucleotide sequence ID" value="NZ_WSUR01000046.1"/>
</dbReference>
<dbReference type="SMR" id="P66452"/>
<dbReference type="STRING" id="220341.gene:17588195"/>
<dbReference type="GeneID" id="66757766"/>
<dbReference type="KEGG" id="stt:t4074"/>
<dbReference type="KEGG" id="sty:STY4367"/>
<dbReference type="PATRIC" id="fig|220341.7.peg.4463"/>
<dbReference type="eggNOG" id="COG0186">
    <property type="taxonomic scope" value="Bacteria"/>
</dbReference>
<dbReference type="HOGENOM" id="CLU_073626_1_1_6"/>
<dbReference type="OMA" id="HPMYGKF"/>
<dbReference type="OrthoDB" id="9811714at2"/>
<dbReference type="Proteomes" id="UP000000541">
    <property type="component" value="Chromosome"/>
</dbReference>
<dbReference type="Proteomes" id="UP000002670">
    <property type="component" value="Chromosome"/>
</dbReference>
<dbReference type="GO" id="GO:0022627">
    <property type="term" value="C:cytosolic small ribosomal subunit"/>
    <property type="evidence" value="ECO:0007669"/>
    <property type="project" value="TreeGrafter"/>
</dbReference>
<dbReference type="GO" id="GO:0019843">
    <property type="term" value="F:rRNA binding"/>
    <property type="evidence" value="ECO:0007669"/>
    <property type="project" value="UniProtKB-UniRule"/>
</dbReference>
<dbReference type="GO" id="GO:0003735">
    <property type="term" value="F:structural constituent of ribosome"/>
    <property type="evidence" value="ECO:0007669"/>
    <property type="project" value="InterPro"/>
</dbReference>
<dbReference type="GO" id="GO:0006412">
    <property type="term" value="P:translation"/>
    <property type="evidence" value="ECO:0007669"/>
    <property type="project" value="UniProtKB-UniRule"/>
</dbReference>
<dbReference type="CDD" id="cd00364">
    <property type="entry name" value="Ribosomal_uS17"/>
    <property type="match status" value="1"/>
</dbReference>
<dbReference type="FunFam" id="2.40.50.140:FF:000014">
    <property type="entry name" value="30S ribosomal protein S17"/>
    <property type="match status" value="1"/>
</dbReference>
<dbReference type="Gene3D" id="2.40.50.140">
    <property type="entry name" value="Nucleic acid-binding proteins"/>
    <property type="match status" value="1"/>
</dbReference>
<dbReference type="HAMAP" id="MF_01345_B">
    <property type="entry name" value="Ribosomal_uS17_B"/>
    <property type="match status" value="1"/>
</dbReference>
<dbReference type="InterPro" id="IPR012340">
    <property type="entry name" value="NA-bd_OB-fold"/>
</dbReference>
<dbReference type="InterPro" id="IPR000266">
    <property type="entry name" value="Ribosomal_uS17"/>
</dbReference>
<dbReference type="InterPro" id="IPR019984">
    <property type="entry name" value="Ribosomal_uS17_bact/chlr"/>
</dbReference>
<dbReference type="InterPro" id="IPR019979">
    <property type="entry name" value="Ribosomal_uS17_CS"/>
</dbReference>
<dbReference type="NCBIfam" id="NF004123">
    <property type="entry name" value="PRK05610.1"/>
    <property type="match status" value="1"/>
</dbReference>
<dbReference type="NCBIfam" id="TIGR03635">
    <property type="entry name" value="uS17_bact"/>
    <property type="match status" value="1"/>
</dbReference>
<dbReference type="PANTHER" id="PTHR10744">
    <property type="entry name" value="40S RIBOSOMAL PROTEIN S11 FAMILY MEMBER"/>
    <property type="match status" value="1"/>
</dbReference>
<dbReference type="PANTHER" id="PTHR10744:SF1">
    <property type="entry name" value="SMALL RIBOSOMAL SUBUNIT PROTEIN US17M"/>
    <property type="match status" value="1"/>
</dbReference>
<dbReference type="Pfam" id="PF00366">
    <property type="entry name" value="Ribosomal_S17"/>
    <property type="match status" value="1"/>
</dbReference>
<dbReference type="PRINTS" id="PR00973">
    <property type="entry name" value="RIBOSOMALS17"/>
</dbReference>
<dbReference type="SUPFAM" id="SSF50249">
    <property type="entry name" value="Nucleic acid-binding proteins"/>
    <property type="match status" value="1"/>
</dbReference>
<dbReference type="PROSITE" id="PS00056">
    <property type="entry name" value="RIBOSOMAL_S17"/>
    <property type="match status" value="1"/>
</dbReference>
<keyword id="KW-0687">Ribonucleoprotein</keyword>
<keyword id="KW-0689">Ribosomal protein</keyword>
<keyword id="KW-0694">RNA-binding</keyword>
<keyword id="KW-0699">rRNA-binding</keyword>
<proteinExistence type="inferred from homology"/>
<reference key="1">
    <citation type="journal article" date="2001" name="Nature">
        <title>Complete genome sequence of a multiple drug resistant Salmonella enterica serovar Typhi CT18.</title>
        <authorList>
            <person name="Parkhill J."/>
            <person name="Dougan G."/>
            <person name="James K.D."/>
            <person name="Thomson N.R."/>
            <person name="Pickard D."/>
            <person name="Wain J."/>
            <person name="Churcher C.M."/>
            <person name="Mungall K.L."/>
            <person name="Bentley S.D."/>
            <person name="Holden M.T.G."/>
            <person name="Sebaihia M."/>
            <person name="Baker S."/>
            <person name="Basham D."/>
            <person name="Brooks K."/>
            <person name="Chillingworth T."/>
            <person name="Connerton P."/>
            <person name="Cronin A."/>
            <person name="Davis P."/>
            <person name="Davies R.M."/>
            <person name="Dowd L."/>
            <person name="White N."/>
            <person name="Farrar J."/>
            <person name="Feltwell T."/>
            <person name="Hamlin N."/>
            <person name="Haque A."/>
            <person name="Hien T.T."/>
            <person name="Holroyd S."/>
            <person name="Jagels K."/>
            <person name="Krogh A."/>
            <person name="Larsen T.S."/>
            <person name="Leather S."/>
            <person name="Moule S."/>
            <person name="O'Gaora P."/>
            <person name="Parry C."/>
            <person name="Quail M.A."/>
            <person name="Rutherford K.M."/>
            <person name="Simmonds M."/>
            <person name="Skelton J."/>
            <person name="Stevens K."/>
            <person name="Whitehead S."/>
            <person name="Barrell B.G."/>
        </authorList>
    </citation>
    <scope>NUCLEOTIDE SEQUENCE [LARGE SCALE GENOMIC DNA]</scope>
    <source>
        <strain>CT18</strain>
    </source>
</reference>
<reference key="2">
    <citation type="journal article" date="2003" name="J. Bacteriol.">
        <title>Comparative genomics of Salmonella enterica serovar Typhi strains Ty2 and CT18.</title>
        <authorList>
            <person name="Deng W."/>
            <person name="Liou S.-R."/>
            <person name="Plunkett G. III"/>
            <person name="Mayhew G.F."/>
            <person name="Rose D.J."/>
            <person name="Burland V."/>
            <person name="Kodoyianni V."/>
            <person name="Schwartz D.C."/>
            <person name="Blattner F.R."/>
        </authorList>
    </citation>
    <scope>NUCLEOTIDE SEQUENCE [LARGE SCALE GENOMIC DNA]</scope>
    <source>
        <strain>ATCC 700931 / Ty2</strain>
    </source>
</reference>
<name>RS17_SALTI</name>
<organism>
    <name type="scientific">Salmonella typhi</name>
    <dbReference type="NCBI Taxonomy" id="90370"/>
    <lineage>
        <taxon>Bacteria</taxon>
        <taxon>Pseudomonadati</taxon>
        <taxon>Pseudomonadota</taxon>
        <taxon>Gammaproteobacteria</taxon>
        <taxon>Enterobacterales</taxon>
        <taxon>Enterobacteriaceae</taxon>
        <taxon>Salmonella</taxon>
    </lineage>
</organism>
<protein>
    <recommendedName>
        <fullName evidence="2">Small ribosomal subunit protein uS17</fullName>
    </recommendedName>
    <alternativeName>
        <fullName evidence="3">30S ribosomal protein S17</fullName>
    </alternativeName>
</protein>
<comment type="function">
    <text evidence="2">One of the primary rRNA binding proteins, it binds specifically to the 5'-end of 16S ribosomal RNA.</text>
</comment>
<comment type="subunit">
    <text evidence="2">Part of the 30S ribosomal subunit.</text>
</comment>
<comment type="similarity">
    <text evidence="2">Belongs to the universal ribosomal protein uS17 family.</text>
</comment>
<evidence type="ECO:0000250" key="1"/>
<evidence type="ECO:0000255" key="2">
    <source>
        <dbReference type="HAMAP-Rule" id="MF_01345"/>
    </source>
</evidence>
<evidence type="ECO:0000305" key="3"/>
<sequence length="84" mass="9722">MTDKIRTLQGRVVSDKMEKSIVVAIERFVKHPIYGKFIKRTTKMHVHDENNECGIGDVVEIRECRPLSKTKSWTLVRVVEKAVL</sequence>